<proteinExistence type="evidence at protein level"/>
<accession>Q99627</accession>
<accession>A8K1H6</accession>
<accession>Q53QS9</accession>
<gene>
    <name type="primary">COPS8</name>
    <name type="synonym">CSN8</name>
</gene>
<feature type="initiator methionine" description="Removed" evidence="6">
    <location>
        <position position="1"/>
    </location>
</feature>
<feature type="chain" id="PRO_0000121007" description="COP9 signalosome complex subunit 8">
    <location>
        <begin position="2"/>
        <end position="209"/>
    </location>
</feature>
<feature type="domain" description="PCI" evidence="1">
    <location>
        <begin position="8"/>
        <end position="179"/>
    </location>
</feature>
<feature type="modified residue" description="Phosphoserine" evidence="6 11 12 13">
    <location>
        <position position="175"/>
    </location>
</feature>
<feature type="splice variant" id="VSP_042715" description="In isoform 2." evidence="9">
    <location>
        <begin position="1"/>
        <end position="49"/>
    </location>
</feature>
<sequence length="209" mass="23226">MPVAVMAESAFSFKKLLDQCENQELEAPGGIATPPVYGQLLALYLLHNDMNNARYLWKRIPPAIKSANSELGGIWSVGQRIWQRDFPGIYTTINAHQWSETVQPIMEALRDATRRRAFALVSQAYTSIIADDFAAFVGLPVEEAVKGILEQGWQADSTTRMVLPRKPVAGALDVSFNKFIPLSEPAPVPPIPNEQQLARLTDYVAFLEN</sequence>
<dbReference type="EMBL" id="U51205">
    <property type="protein sequence ID" value="AAB38529.1"/>
    <property type="molecule type" value="mRNA"/>
</dbReference>
<dbReference type="EMBL" id="AK289891">
    <property type="protein sequence ID" value="BAF82580.1"/>
    <property type="molecule type" value="mRNA"/>
</dbReference>
<dbReference type="EMBL" id="CR456994">
    <property type="protein sequence ID" value="CAG33275.1"/>
    <property type="molecule type" value="mRNA"/>
</dbReference>
<dbReference type="EMBL" id="AC105760">
    <property type="protein sequence ID" value="AAY14978.1"/>
    <property type="molecule type" value="Genomic_DNA"/>
</dbReference>
<dbReference type="EMBL" id="CH471063">
    <property type="protein sequence ID" value="EAW71097.1"/>
    <property type="molecule type" value="Genomic_DNA"/>
</dbReference>
<dbReference type="EMBL" id="CH471063">
    <property type="protein sequence ID" value="EAW71098.1"/>
    <property type="molecule type" value="Genomic_DNA"/>
</dbReference>
<dbReference type="EMBL" id="BC003090">
    <property type="protein sequence ID" value="AAH03090.1"/>
    <property type="molecule type" value="mRNA"/>
</dbReference>
<dbReference type="EMBL" id="BC036499">
    <property type="protein sequence ID" value="AAH36499.1"/>
    <property type="molecule type" value="mRNA"/>
</dbReference>
<dbReference type="EMBL" id="BC080617">
    <property type="protein sequence ID" value="AAH80617.1"/>
    <property type="molecule type" value="mRNA"/>
</dbReference>
<dbReference type="CCDS" id="CCDS2517.1">
    <molecule id="Q99627-1"/>
</dbReference>
<dbReference type="CCDS" id="CCDS42835.1">
    <molecule id="Q99627-2"/>
</dbReference>
<dbReference type="RefSeq" id="NP_006701.1">
    <molecule id="Q99627-1"/>
    <property type="nucleotide sequence ID" value="NM_006710.5"/>
</dbReference>
<dbReference type="RefSeq" id="NP_937832.1">
    <molecule id="Q99627-2"/>
    <property type="nucleotide sequence ID" value="NM_198189.3"/>
</dbReference>
<dbReference type="PDB" id="4D10">
    <property type="method" value="X-ray"/>
    <property type="resolution" value="3.80 A"/>
    <property type="chains" value="H/P=2-209"/>
</dbReference>
<dbReference type="PDB" id="4D18">
    <property type="method" value="X-ray"/>
    <property type="resolution" value="4.08 A"/>
    <property type="chains" value="H/P=1-209"/>
</dbReference>
<dbReference type="PDB" id="4WSN">
    <property type="method" value="X-ray"/>
    <property type="resolution" value="5.50 A"/>
    <property type="chains" value="H/P/X/f/n/v=1-209"/>
</dbReference>
<dbReference type="PDB" id="6R6H">
    <property type="method" value="EM"/>
    <property type="resolution" value="8.40 A"/>
    <property type="chains" value="H=1-209"/>
</dbReference>
<dbReference type="PDB" id="6R7F">
    <property type="method" value="EM"/>
    <property type="resolution" value="8.20 A"/>
    <property type="chains" value="H=1-209"/>
</dbReference>
<dbReference type="PDB" id="6R7H">
    <property type="method" value="EM"/>
    <property type="resolution" value="8.80 A"/>
    <property type="chains" value="H=11-209"/>
</dbReference>
<dbReference type="PDB" id="6R7I">
    <property type="method" value="EM"/>
    <property type="resolution" value="5.90 A"/>
    <property type="chains" value="H=1-209"/>
</dbReference>
<dbReference type="PDB" id="6R7N">
    <property type="method" value="EM"/>
    <property type="resolution" value="6.50 A"/>
    <property type="chains" value="H=11-209"/>
</dbReference>
<dbReference type="PDB" id="8H38">
    <property type="method" value="EM"/>
    <property type="resolution" value="4.25 A"/>
    <property type="chains" value="H=1-209"/>
</dbReference>
<dbReference type="PDB" id="8H3A">
    <property type="method" value="EM"/>
    <property type="resolution" value="7.51 A"/>
    <property type="chains" value="H=1-209"/>
</dbReference>
<dbReference type="PDB" id="8H3F">
    <property type="method" value="EM"/>
    <property type="resolution" value="6.73 A"/>
    <property type="chains" value="H=1-209"/>
</dbReference>
<dbReference type="PDBsum" id="4D10"/>
<dbReference type="PDBsum" id="4D18"/>
<dbReference type="PDBsum" id="4WSN"/>
<dbReference type="PDBsum" id="6R6H"/>
<dbReference type="PDBsum" id="6R7F"/>
<dbReference type="PDBsum" id="6R7H"/>
<dbReference type="PDBsum" id="6R7I"/>
<dbReference type="PDBsum" id="6R7N"/>
<dbReference type="PDBsum" id="8H38"/>
<dbReference type="PDBsum" id="8H3A"/>
<dbReference type="PDBsum" id="8H3F"/>
<dbReference type="EMDB" id="EMD-3313"/>
<dbReference type="EMDB" id="EMD-3314"/>
<dbReference type="EMDB" id="EMD-3315"/>
<dbReference type="EMDB" id="EMD-3316"/>
<dbReference type="EMDB" id="EMD-3317"/>
<dbReference type="EMDB" id="EMD-3401"/>
<dbReference type="EMDB" id="EMD-34455"/>
<dbReference type="EMDB" id="EMD-34462"/>
<dbReference type="EMDB" id="EMD-34467"/>
<dbReference type="EMDB" id="EMD-4736"/>
<dbReference type="EMDB" id="EMD-4739"/>
<dbReference type="EMDB" id="EMD-4741"/>
<dbReference type="EMDB" id="EMD-4742"/>
<dbReference type="EMDB" id="EMD-4744"/>
<dbReference type="SMR" id="Q99627"/>
<dbReference type="BioGRID" id="116124">
    <property type="interactions" value="138"/>
</dbReference>
<dbReference type="ComplexPortal" id="CPX-1870">
    <property type="entry name" value="COP9 signalosome variant 1"/>
</dbReference>
<dbReference type="ComplexPortal" id="CPX-1871">
    <property type="entry name" value="COP9 signalosome variant 2"/>
</dbReference>
<dbReference type="CORUM" id="Q99627"/>
<dbReference type="DIP" id="DIP-42075N"/>
<dbReference type="FunCoup" id="Q99627">
    <property type="interactions" value="4144"/>
</dbReference>
<dbReference type="IntAct" id="Q99627">
    <property type="interactions" value="64"/>
</dbReference>
<dbReference type="MINT" id="Q99627"/>
<dbReference type="STRING" id="9606.ENSP00000346340"/>
<dbReference type="ChEMBL" id="CHEMBL4296015"/>
<dbReference type="GlyGen" id="Q99627">
    <property type="glycosylation" value="1 site, 1 O-linked glycan (1 site)"/>
</dbReference>
<dbReference type="iPTMnet" id="Q99627"/>
<dbReference type="PhosphoSitePlus" id="Q99627"/>
<dbReference type="BioMuta" id="COPS8"/>
<dbReference type="jPOST" id="Q99627"/>
<dbReference type="MassIVE" id="Q99627"/>
<dbReference type="PaxDb" id="9606-ENSP00000346340"/>
<dbReference type="PeptideAtlas" id="Q99627"/>
<dbReference type="ProteomicsDB" id="78367">
    <molecule id="Q99627-1"/>
</dbReference>
<dbReference type="ProteomicsDB" id="78368">
    <molecule id="Q99627-2"/>
</dbReference>
<dbReference type="Pumba" id="Q99627"/>
<dbReference type="TopDownProteomics" id="Q99627-1">
    <molecule id="Q99627-1"/>
</dbReference>
<dbReference type="Antibodypedia" id="34471">
    <property type="antibodies" value="253 antibodies from 36 providers"/>
</dbReference>
<dbReference type="DNASU" id="10920"/>
<dbReference type="Ensembl" id="ENST00000354371.7">
    <molecule id="Q99627-1"/>
    <property type="protein sequence ID" value="ENSP00000346340.2"/>
    <property type="gene ID" value="ENSG00000198612.11"/>
</dbReference>
<dbReference type="Ensembl" id="ENST00000392008.6">
    <molecule id="Q99627-2"/>
    <property type="protein sequence ID" value="ENSP00000375865.2"/>
    <property type="gene ID" value="ENSG00000198612.11"/>
</dbReference>
<dbReference type="GeneID" id="10920"/>
<dbReference type="KEGG" id="hsa:10920"/>
<dbReference type="MANE-Select" id="ENST00000354371.7">
    <property type="protein sequence ID" value="ENSP00000346340.2"/>
    <property type="RefSeq nucleotide sequence ID" value="NM_006710.5"/>
    <property type="RefSeq protein sequence ID" value="NP_006701.1"/>
</dbReference>
<dbReference type="UCSC" id="uc002vwg.4">
    <molecule id="Q99627-1"/>
    <property type="organism name" value="human"/>
</dbReference>
<dbReference type="AGR" id="HGNC:24335"/>
<dbReference type="CTD" id="10920"/>
<dbReference type="DisGeNET" id="10920"/>
<dbReference type="GeneCards" id="COPS8"/>
<dbReference type="HGNC" id="HGNC:24335">
    <property type="gene designation" value="COPS8"/>
</dbReference>
<dbReference type="HPA" id="ENSG00000198612">
    <property type="expression patterns" value="Low tissue specificity"/>
</dbReference>
<dbReference type="MIM" id="616011">
    <property type="type" value="gene"/>
</dbReference>
<dbReference type="neXtProt" id="NX_Q99627"/>
<dbReference type="OpenTargets" id="ENSG00000198612"/>
<dbReference type="PharmGKB" id="PA134968686"/>
<dbReference type="VEuPathDB" id="HostDB:ENSG00000198612"/>
<dbReference type="eggNOG" id="KOG4414">
    <property type="taxonomic scope" value="Eukaryota"/>
</dbReference>
<dbReference type="GeneTree" id="ENSGT00390000000977"/>
<dbReference type="HOGENOM" id="CLU_098091_2_0_1"/>
<dbReference type="InParanoid" id="Q99627"/>
<dbReference type="OMA" id="MRIPDKL"/>
<dbReference type="OrthoDB" id="5351233at2759"/>
<dbReference type="PAN-GO" id="Q99627">
    <property type="GO annotations" value="1 GO annotation based on evolutionary models"/>
</dbReference>
<dbReference type="PhylomeDB" id="Q99627"/>
<dbReference type="TreeFam" id="TF101150"/>
<dbReference type="PathwayCommons" id="Q99627"/>
<dbReference type="Reactome" id="R-HSA-5696394">
    <property type="pathway name" value="DNA Damage Recognition in GG-NER"/>
</dbReference>
<dbReference type="Reactome" id="R-HSA-6781823">
    <property type="pathway name" value="Formation of TC-NER Pre-Incision Complex"/>
</dbReference>
<dbReference type="Reactome" id="R-HSA-8856825">
    <property type="pathway name" value="Cargo recognition for clathrin-mediated endocytosis"/>
</dbReference>
<dbReference type="Reactome" id="R-HSA-8951664">
    <property type="pathway name" value="Neddylation"/>
</dbReference>
<dbReference type="SignaLink" id="Q99627"/>
<dbReference type="SIGNOR" id="Q99627"/>
<dbReference type="BioGRID-ORCS" id="10920">
    <property type="hits" value="750 hits in 1176 CRISPR screens"/>
</dbReference>
<dbReference type="CD-CODE" id="8C2F96ED">
    <property type="entry name" value="Centrosome"/>
</dbReference>
<dbReference type="ChiTaRS" id="COPS8">
    <property type="organism name" value="human"/>
</dbReference>
<dbReference type="EvolutionaryTrace" id="Q99627"/>
<dbReference type="GeneWiki" id="COPS8"/>
<dbReference type="GenomeRNAi" id="10920"/>
<dbReference type="Pharos" id="Q99627">
    <property type="development level" value="Tbio"/>
</dbReference>
<dbReference type="PRO" id="PR:Q99627"/>
<dbReference type="Proteomes" id="UP000005640">
    <property type="component" value="Chromosome 2"/>
</dbReference>
<dbReference type="RNAct" id="Q99627">
    <property type="molecule type" value="protein"/>
</dbReference>
<dbReference type="Bgee" id="ENSG00000198612">
    <property type="expression patterns" value="Expressed in secondary oocyte and 211 other cell types or tissues"/>
</dbReference>
<dbReference type="ExpressionAtlas" id="Q99627">
    <property type="expression patterns" value="baseline and differential"/>
</dbReference>
<dbReference type="GO" id="GO:0008180">
    <property type="term" value="C:COP9 signalosome"/>
    <property type="evidence" value="ECO:0000314"/>
    <property type="project" value="UniProtKB"/>
</dbReference>
<dbReference type="GO" id="GO:0005737">
    <property type="term" value="C:cytoplasm"/>
    <property type="evidence" value="ECO:0000314"/>
    <property type="project" value="ComplexPortal"/>
</dbReference>
<dbReference type="GO" id="GO:0005829">
    <property type="term" value="C:cytosol"/>
    <property type="evidence" value="ECO:0000314"/>
    <property type="project" value="HPA"/>
</dbReference>
<dbReference type="GO" id="GO:0070062">
    <property type="term" value="C:extracellular exosome"/>
    <property type="evidence" value="ECO:0007005"/>
    <property type="project" value="UniProtKB"/>
</dbReference>
<dbReference type="GO" id="GO:0005654">
    <property type="term" value="C:nucleoplasm"/>
    <property type="evidence" value="ECO:0000314"/>
    <property type="project" value="HPA"/>
</dbReference>
<dbReference type="GO" id="GO:0005634">
    <property type="term" value="C:nucleus"/>
    <property type="evidence" value="ECO:0000314"/>
    <property type="project" value="ComplexPortal"/>
</dbReference>
<dbReference type="GO" id="GO:0048471">
    <property type="term" value="C:perinuclear region of cytoplasm"/>
    <property type="evidence" value="ECO:0000314"/>
    <property type="project" value="UniProtKB"/>
</dbReference>
<dbReference type="GO" id="GO:0007250">
    <property type="term" value="P:activation of NF-kappaB-inducing kinase activity"/>
    <property type="evidence" value="ECO:0000315"/>
    <property type="project" value="UniProtKB"/>
</dbReference>
<dbReference type="GO" id="GO:0010387">
    <property type="term" value="P:COP9 signalosome assembly"/>
    <property type="evidence" value="ECO:0007669"/>
    <property type="project" value="InterPro"/>
</dbReference>
<dbReference type="GO" id="GO:0008285">
    <property type="term" value="P:negative regulation of cell population proliferation"/>
    <property type="evidence" value="ECO:0000315"/>
    <property type="project" value="UniProtKB"/>
</dbReference>
<dbReference type="GO" id="GO:0000338">
    <property type="term" value="P:protein deneddylation"/>
    <property type="evidence" value="ECO:0000314"/>
    <property type="project" value="UniProtKB"/>
</dbReference>
<dbReference type="GO" id="GO:0045116">
    <property type="term" value="P:protein neddylation"/>
    <property type="evidence" value="ECO:0000303"/>
    <property type="project" value="ComplexPortal"/>
</dbReference>
<dbReference type="GO" id="GO:0006468">
    <property type="term" value="P:protein phosphorylation"/>
    <property type="evidence" value="ECO:0000314"/>
    <property type="project" value="UniProtKB"/>
</dbReference>
<dbReference type="GO" id="GO:2000434">
    <property type="term" value="P:regulation of protein neddylation"/>
    <property type="evidence" value="ECO:0000303"/>
    <property type="project" value="ComplexPortal"/>
</dbReference>
<dbReference type="FunFam" id="1.25.40.990:FF:000011">
    <property type="entry name" value="COP9 signalosome complex subunit 8-like Protein"/>
    <property type="match status" value="1"/>
</dbReference>
<dbReference type="Gene3D" id="1.25.40.990">
    <property type="match status" value="1"/>
</dbReference>
<dbReference type="InterPro" id="IPR033205">
    <property type="entry name" value="COP9_CSN8"/>
</dbReference>
<dbReference type="InterPro" id="IPR033464">
    <property type="entry name" value="CSN8_PSD8_EIF3K"/>
</dbReference>
<dbReference type="InterPro" id="IPR000717">
    <property type="entry name" value="PCI_dom"/>
</dbReference>
<dbReference type="PANTHER" id="PTHR13339">
    <property type="entry name" value="COP9 SIGNALOSOME COMPLEX SUBUNIT 8"/>
    <property type="match status" value="1"/>
</dbReference>
<dbReference type="PANTHER" id="PTHR13339:SF0">
    <property type="entry name" value="COP9 SIGNALOSOME COMPLEX SUBUNIT 8"/>
    <property type="match status" value="1"/>
</dbReference>
<dbReference type="Pfam" id="PF10075">
    <property type="entry name" value="CSN8_PSD8_EIF3K"/>
    <property type="match status" value="1"/>
</dbReference>
<dbReference type="PROSITE" id="PS50250">
    <property type="entry name" value="PCI"/>
    <property type="match status" value="1"/>
</dbReference>
<evidence type="ECO:0000255" key="1">
    <source>
        <dbReference type="PROSITE-ProRule" id="PRU01185"/>
    </source>
</evidence>
<evidence type="ECO:0000269" key="2">
    <source>
    </source>
</evidence>
<evidence type="ECO:0000269" key="3">
    <source>
    </source>
</evidence>
<evidence type="ECO:0000269" key="4">
    <source>
    </source>
</evidence>
<evidence type="ECO:0000269" key="5">
    <source>
    </source>
</evidence>
<evidence type="ECO:0000269" key="6">
    <source>
    </source>
</evidence>
<evidence type="ECO:0000269" key="7">
    <source>
    </source>
</evidence>
<evidence type="ECO:0000269" key="8">
    <source>
    </source>
</evidence>
<evidence type="ECO:0000303" key="9">
    <source>
    </source>
</evidence>
<evidence type="ECO:0000305" key="10"/>
<evidence type="ECO:0007744" key="11">
    <source>
    </source>
</evidence>
<evidence type="ECO:0007744" key="12">
    <source>
    </source>
</evidence>
<evidence type="ECO:0007744" key="13">
    <source>
    </source>
</evidence>
<name>CSN8_HUMAN</name>
<organism>
    <name type="scientific">Homo sapiens</name>
    <name type="common">Human</name>
    <dbReference type="NCBI Taxonomy" id="9606"/>
    <lineage>
        <taxon>Eukaryota</taxon>
        <taxon>Metazoa</taxon>
        <taxon>Chordata</taxon>
        <taxon>Craniata</taxon>
        <taxon>Vertebrata</taxon>
        <taxon>Euteleostomi</taxon>
        <taxon>Mammalia</taxon>
        <taxon>Eutheria</taxon>
        <taxon>Euarchontoglires</taxon>
        <taxon>Primates</taxon>
        <taxon>Haplorrhini</taxon>
        <taxon>Catarrhini</taxon>
        <taxon>Hominidae</taxon>
        <taxon>Homo</taxon>
    </lineage>
</organism>
<keyword id="KW-0002">3D-structure</keyword>
<keyword id="KW-0025">Alternative splicing</keyword>
<keyword id="KW-0963">Cytoplasm</keyword>
<keyword id="KW-0903">Direct protein sequencing</keyword>
<keyword id="KW-0539">Nucleus</keyword>
<keyword id="KW-0597">Phosphoprotein</keyword>
<keyword id="KW-1267">Proteomics identification</keyword>
<keyword id="KW-1185">Reference proteome</keyword>
<keyword id="KW-0736">Signalosome</keyword>
<protein>
    <recommendedName>
        <fullName>COP9 signalosome complex subunit 8</fullName>
        <shortName>SGN8</shortName>
        <shortName>Signalosome subunit 8</shortName>
    </recommendedName>
    <alternativeName>
        <fullName>COP9 homolog</fullName>
        <shortName>hCOP9</shortName>
    </alternativeName>
    <alternativeName>
        <fullName>JAB1-containing signalosome subunit 8</fullName>
    </alternativeName>
</protein>
<reference key="1">
    <citation type="journal article" date="1995" name="Cell">
        <title>The novel components of the Arabidopsis light signaling pathway may define a group of general developmental regulators shared by both animal and plant kingdoms.</title>
        <authorList>
            <person name="Chamovitz D.A."/>
            <person name="Deng X.-W."/>
        </authorList>
    </citation>
    <scope>NUCLEOTIDE SEQUENCE [MRNA] (ISOFORM 1)</scope>
</reference>
<reference key="2">
    <citation type="journal article" date="2004" name="Nat. Genet.">
        <title>Complete sequencing and characterization of 21,243 full-length human cDNAs.</title>
        <authorList>
            <person name="Ota T."/>
            <person name="Suzuki Y."/>
            <person name="Nishikawa T."/>
            <person name="Otsuki T."/>
            <person name="Sugiyama T."/>
            <person name="Irie R."/>
            <person name="Wakamatsu A."/>
            <person name="Hayashi K."/>
            <person name="Sato H."/>
            <person name="Nagai K."/>
            <person name="Kimura K."/>
            <person name="Makita H."/>
            <person name="Sekine M."/>
            <person name="Obayashi M."/>
            <person name="Nishi T."/>
            <person name="Shibahara T."/>
            <person name="Tanaka T."/>
            <person name="Ishii S."/>
            <person name="Yamamoto J."/>
            <person name="Saito K."/>
            <person name="Kawai Y."/>
            <person name="Isono Y."/>
            <person name="Nakamura Y."/>
            <person name="Nagahari K."/>
            <person name="Murakami K."/>
            <person name="Yasuda T."/>
            <person name="Iwayanagi T."/>
            <person name="Wagatsuma M."/>
            <person name="Shiratori A."/>
            <person name="Sudo H."/>
            <person name="Hosoiri T."/>
            <person name="Kaku Y."/>
            <person name="Kodaira H."/>
            <person name="Kondo H."/>
            <person name="Sugawara M."/>
            <person name="Takahashi M."/>
            <person name="Kanda K."/>
            <person name="Yokoi T."/>
            <person name="Furuya T."/>
            <person name="Kikkawa E."/>
            <person name="Omura Y."/>
            <person name="Abe K."/>
            <person name="Kamihara K."/>
            <person name="Katsuta N."/>
            <person name="Sato K."/>
            <person name="Tanikawa M."/>
            <person name="Yamazaki M."/>
            <person name="Ninomiya K."/>
            <person name="Ishibashi T."/>
            <person name="Yamashita H."/>
            <person name="Murakawa K."/>
            <person name="Fujimori K."/>
            <person name="Tanai H."/>
            <person name="Kimata M."/>
            <person name="Watanabe M."/>
            <person name="Hiraoka S."/>
            <person name="Chiba Y."/>
            <person name="Ishida S."/>
            <person name="Ono Y."/>
            <person name="Takiguchi S."/>
            <person name="Watanabe S."/>
            <person name="Yosida M."/>
            <person name="Hotuta T."/>
            <person name="Kusano J."/>
            <person name="Kanehori K."/>
            <person name="Takahashi-Fujii A."/>
            <person name="Hara H."/>
            <person name="Tanase T.-O."/>
            <person name="Nomura Y."/>
            <person name="Togiya S."/>
            <person name="Komai F."/>
            <person name="Hara R."/>
            <person name="Takeuchi K."/>
            <person name="Arita M."/>
            <person name="Imose N."/>
            <person name="Musashino K."/>
            <person name="Yuuki H."/>
            <person name="Oshima A."/>
            <person name="Sasaki N."/>
            <person name="Aotsuka S."/>
            <person name="Yoshikawa Y."/>
            <person name="Matsunawa H."/>
            <person name="Ichihara T."/>
            <person name="Shiohata N."/>
            <person name="Sano S."/>
            <person name="Moriya S."/>
            <person name="Momiyama H."/>
            <person name="Satoh N."/>
            <person name="Takami S."/>
            <person name="Terashima Y."/>
            <person name="Suzuki O."/>
            <person name="Nakagawa S."/>
            <person name="Senoh A."/>
            <person name="Mizoguchi H."/>
            <person name="Goto Y."/>
            <person name="Shimizu F."/>
            <person name="Wakebe H."/>
            <person name="Hishigaki H."/>
            <person name="Watanabe T."/>
            <person name="Sugiyama A."/>
            <person name="Takemoto M."/>
            <person name="Kawakami B."/>
            <person name="Yamazaki M."/>
            <person name="Watanabe K."/>
            <person name="Kumagai A."/>
            <person name="Itakura S."/>
            <person name="Fukuzumi Y."/>
            <person name="Fujimori Y."/>
            <person name="Komiyama M."/>
            <person name="Tashiro H."/>
            <person name="Tanigami A."/>
            <person name="Fujiwara T."/>
            <person name="Ono T."/>
            <person name="Yamada K."/>
            <person name="Fujii Y."/>
            <person name="Ozaki K."/>
            <person name="Hirao M."/>
            <person name="Ohmori Y."/>
            <person name="Kawabata A."/>
            <person name="Hikiji T."/>
            <person name="Kobatake N."/>
            <person name="Inagaki H."/>
            <person name="Ikema Y."/>
            <person name="Okamoto S."/>
            <person name="Okitani R."/>
            <person name="Kawakami T."/>
            <person name="Noguchi S."/>
            <person name="Itoh T."/>
            <person name="Shigeta K."/>
            <person name="Senba T."/>
            <person name="Matsumura K."/>
            <person name="Nakajima Y."/>
            <person name="Mizuno T."/>
            <person name="Morinaga M."/>
            <person name="Sasaki M."/>
            <person name="Togashi T."/>
            <person name="Oyama M."/>
            <person name="Hata H."/>
            <person name="Watanabe M."/>
            <person name="Komatsu T."/>
            <person name="Mizushima-Sugano J."/>
            <person name="Satoh T."/>
            <person name="Shirai Y."/>
            <person name="Takahashi Y."/>
            <person name="Nakagawa K."/>
            <person name="Okumura K."/>
            <person name="Nagase T."/>
            <person name="Nomura N."/>
            <person name="Kikuchi H."/>
            <person name="Masuho Y."/>
            <person name="Yamashita R."/>
            <person name="Nakai K."/>
            <person name="Yada T."/>
            <person name="Nakamura Y."/>
            <person name="Ohara O."/>
            <person name="Isogai T."/>
            <person name="Sugano S."/>
        </authorList>
    </citation>
    <scope>NUCLEOTIDE SEQUENCE [LARGE SCALE MRNA] (ISOFORM 2)</scope>
    <source>
        <tissue>Corpus callosum</tissue>
    </source>
</reference>
<reference key="3">
    <citation type="submission" date="2004-06" db="EMBL/GenBank/DDBJ databases">
        <title>Cloning of human full open reading frames in Gateway(TM) system entry vector (pDONR201).</title>
        <authorList>
            <person name="Ebert L."/>
            <person name="Schick M."/>
            <person name="Neubert P."/>
            <person name="Schatten R."/>
            <person name="Henze S."/>
            <person name="Korn B."/>
        </authorList>
    </citation>
    <scope>NUCLEOTIDE SEQUENCE [LARGE SCALE MRNA] (ISOFORM 1)</scope>
</reference>
<reference key="4">
    <citation type="journal article" date="2005" name="Nature">
        <title>Generation and annotation of the DNA sequences of human chromosomes 2 and 4.</title>
        <authorList>
            <person name="Hillier L.W."/>
            <person name="Graves T.A."/>
            <person name="Fulton R.S."/>
            <person name="Fulton L.A."/>
            <person name="Pepin K.H."/>
            <person name="Minx P."/>
            <person name="Wagner-McPherson C."/>
            <person name="Layman D."/>
            <person name="Wylie K."/>
            <person name="Sekhon M."/>
            <person name="Becker M.C."/>
            <person name="Fewell G.A."/>
            <person name="Delehaunty K.D."/>
            <person name="Miner T.L."/>
            <person name="Nash W.E."/>
            <person name="Kremitzki C."/>
            <person name="Oddy L."/>
            <person name="Du H."/>
            <person name="Sun H."/>
            <person name="Bradshaw-Cordum H."/>
            <person name="Ali J."/>
            <person name="Carter J."/>
            <person name="Cordes M."/>
            <person name="Harris A."/>
            <person name="Isak A."/>
            <person name="van Brunt A."/>
            <person name="Nguyen C."/>
            <person name="Du F."/>
            <person name="Courtney L."/>
            <person name="Kalicki J."/>
            <person name="Ozersky P."/>
            <person name="Abbott S."/>
            <person name="Armstrong J."/>
            <person name="Belter E.A."/>
            <person name="Caruso L."/>
            <person name="Cedroni M."/>
            <person name="Cotton M."/>
            <person name="Davidson T."/>
            <person name="Desai A."/>
            <person name="Elliott G."/>
            <person name="Erb T."/>
            <person name="Fronick C."/>
            <person name="Gaige T."/>
            <person name="Haakenson W."/>
            <person name="Haglund K."/>
            <person name="Holmes A."/>
            <person name="Harkins R."/>
            <person name="Kim K."/>
            <person name="Kruchowski S.S."/>
            <person name="Strong C.M."/>
            <person name="Grewal N."/>
            <person name="Goyea E."/>
            <person name="Hou S."/>
            <person name="Levy A."/>
            <person name="Martinka S."/>
            <person name="Mead K."/>
            <person name="McLellan M.D."/>
            <person name="Meyer R."/>
            <person name="Randall-Maher J."/>
            <person name="Tomlinson C."/>
            <person name="Dauphin-Kohlberg S."/>
            <person name="Kozlowicz-Reilly A."/>
            <person name="Shah N."/>
            <person name="Swearengen-Shahid S."/>
            <person name="Snider J."/>
            <person name="Strong J.T."/>
            <person name="Thompson J."/>
            <person name="Yoakum M."/>
            <person name="Leonard S."/>
            <person name="Pearman C."/>
            <person name="Trani L."/>
            <person name="Radionenko M."/>
            <person name="Waligorski J.E."/>
            <person name="Wang C."/>
            <person name="Rock S.M."/>
            <person name="Tin-Wollam A.-M."/>
            <person name="Maupin R."/>
            <person name="Latreille P."/>
            <person name="Wendl M.C."/>
            <person name="Yang S.-P."/>
            <person name="Pohl C."/>
            <person name="Wallis J.W."/>
            <person name="Spieth J."/>
            <person name="Bieri T.A."/>
            <person name="Berkowicz N."/>
            <person name="Nelson J.O."/>
            <person name="Osborne J."/>
            <person name="Ding L."/>
            <person name="Meyer R."/>
            <person name="Sabo A."/>
            <person name="Shotland Y."/>
            <person name="Sinha P."/>
            <person name="Wohldmann P.E."/>
            <person name="Cook L.L."/>
            <person name="Hickenbotham M.T."/>
            <person name="Eldred J."/>
            <person name="Williams D."/>
            <person name="Jones T.A."/>
            <person name="She X."/>
            <person name="Ciccarelli F.D."/>
            <person name="Izaurralde E."/>
            <person name="Taylor J."/>
            <person name="Schmutz J."/>
            <person name="Myers R.M."/>
            <person name="Cox D.R."/>
            <person name="Huang X."/>
            <person name="McPherson J.D."/>
            <person name="Mardis E.R."/>
            <person name="Clifton S.W."/>
            <person name="Warren W.C."/>
            <person name="Chinwalla A.T."/>
            <person name="Eddy S.R."/>
            <person name="Marra M.A."/>
            <person name="Ovcharenko I."/>
            <person name="Furey T.S."/>
            <person name="Miller W."/>
            <person name="Eichler E.E."/>
            <person name="Bork P."/>
            <person name="Suyama M."/>
            <person name="Torrents D."/>
            <person name="Waterston R.H."/>
            <person name="Wilson R.K."/>
        </authorList>
    </citation>
    <scope>NUCLEOTIDE SEQUENCE [LARGE SCALE GENOMIC DNA]</scope>
</reference>
<reference key="5">
    <citation type="submission" date="2005-07" db="EMBL/GenBank/DDBJ databases">
        <authorList>
            <person name="Mural R.J."/>
            <person name="Istrail S."/>
            <person name="Sutton G."/>
            <person name="Florea L."/>
            <person name="Halpern A.L."/>
            <person name="Mobarry C.M."/>
            <person name="Lippert R."/>
            <person name="Walenz B."/>
            <person name="Shatkay H."/>
            <person name="Dew I."/>
            <person name="Miller J.R."/>
            <person name="Flanigan M.J."/>
            <person name="Edwards N.J."/>
            <person name="Bolanos R."/>
            <person name="Fasulo D."/>
            <person name="Halldorsson B.V."/>
            <person name="Hannenhalli S."/>
            <person name="Turner R."/>
            <person name="Yooseph S."/>
            <person name="Lu F."/>
            <person name="Nusskern D.R."/>
            <person name="Shue B.C."/>
            <person name="Zheng X.H."/>
            <person name="Zhong F."/>
            <person name="Delcher A.L."/>
            <person name="Huson D.H."/>
            <person name="Kravitz S.A."/>
            <person name="Mouchard L."/>
            <person name="Reinert K."/>
            <person name="Remington K.A."/>
            <person name="Clark A.G."/>
            <person name="Waterman M.S."/>
            <person name="Eichler E.E."/>
            <person name="Adams M.D."/>
            <person name="Hunkapiller M.W."/>
            <person name="Myers E.W."/>
            <person name="Venter J.C."/>
        </authorList>
    </citation>
    <scope>NUCLEOTIDE SEQUENCE [LARGE SCALE GENOMIC DNA]</scope>
</reference>
<reference key="6">
    <citation type="journal article" date="2004" name="Genome Res.">
        <title>The status, quality, and expansion of the NIH full-length cDNA project: the Mammalian Gene Collection (MGC).</title>
        <authorList>
            <consortium name="The MGC Project Team"/>
        </authorList>
    </citation>
    <scope>NUCLEOTIDE SEQUENCE [LARGE SCALE MRNA] (ISOFORM 1)</scope>
    <source>
        <tissue>Brain</tissue>
        <tissue>Skin</tissue>
    </source>
</reference>
<reference key="7">
    <citation type="journal article" date="1998" name="FASEB J.">
        <title>A novel protein complex involved in signal transduction possessing similarities to 26S proteasome subunits.</title>
        <authorList>
            <person name="Seeger M."/>
            <person name="Kraft R."/>
            <person name="Ferrell K."/>
            <person name="Bech-Otschir D."/>
            <person name="Dumdey R."/>
            <person name="Schade R."/>
            <person name="Gordon C."/>
            <person name="Naumann M."/>
            <person name="Dubiel W."/>
        </authorList>
    </citation>
    <scope>PARTIAL PROTEIN SEQUENCE</scope>
    <scope>FUNCTION</scope>
    <scope>SUBCELLULAR LOCATION</scope>
</reference>
<reference key="8">
    <citation type="journal article" date="2001" name="EMBO J.">
        <title>COP9 signalosome-specific phosphorylation targets p53 to degradation by the ubiquitin system.</title>
        <authorList>
            <person name="Bech-Otschir D."/>
            <person name="Kraft R."/>
            <person name="Huang X."/>
            <person name="Henklein P."/>
            <person name="Kapelari B."/>
            <person name="Pollmann C."/>
            <person name="Dubiel W."/>
        </authorList>
    </citation>
    <scope>FUNCTION</scope>
</reference>
<reference key="9">
    <citation type="journal article" date="2001" name="Science">
        <title>Promotion of NEDD-CUL1 conjugate cleavage by COP9 signalosome.</title>
        <authorList>
            <person name="Lyapina S."/>
            <person name="Cope G."/>
            <person name="Shevchenko A."/>
            <person name="Serino G."/>
            <person name="Tsuge T."/>
            <person name="Zhou C."/>
            <person name="Wolf D.A."/>
            <person name="Wei N."/>
            <person name="Shevchenko A."/>
            <person name="Deshaies R.J."/>
        </authorList>
    </citation>
    <scope>FUNCTION</scope>
    <scope>COMPOSITION OF THE CSN COMPLEX</scope>
</reference>
<reference key="10">
    <citation type="journal article" date="2003" name="Cell">
        <title>The ubiquitin ligase activity in the DDB2 and CSA complexes is differentially regulated by the COP9 signalosome in response to DNA damage.</title>
        <authorList>
            <person name="Groisman R."/>
            <person name="Polanowska J."/>
            <person name="Kuraoka I."/>
            <person name="Sawada J."/>
            <person name="Saijo M."/>
            <person name="Drapkin R."/>
            <person name="Kisselev A.F."/>
            <person name="Tanaka K."/>
            <person name="Nakatani Y."/>
        </authorList>
    </citation>
    <scope>FUNCTION</scope>
</reference>
<reference key="11">
    <citation type="journal article" date="2003" name="EMBO J.">
        <title>Protein kinase CK2 and protein kinase D are associated with the COP9 signalosome.</title>
        <authorList>
            <person name="Uhle S."/>
            <person name="Medalia O."/>
            <person name="Waldron R."/>
            <person name="Dumdey R."/>
            <person name="Henklein P."/>
            <person name="Bech-Otschir D."/>
            <person name="Huang X."/>
            <person name="Berse M."/>
            <person name="Sperling J."/>
            <person name="Schade R."/>
            <person name="Dubiel W."/>
        </authorList>
    </citation>
    <scope>FUNCTION</scope>
</reference>
<reference key="12">
    <citation type="journal article" date="2008" name="J. Proteome Res.">
        <title>Characterization of the human COP9 signalosome complex using affinity purification and mass spectrometry.</title>
        <authorList>
            <person name="Fang L."/>
            <person name="Wang X."/>
            <person name="Yamoah K."/>
            <person name="Chen P.L."/>
            <person name="Pan Z.Q."/>
            <person name="Huang L."/>
        </authorList>
    </citation>
    <scope>IDENTIFICATION IN THE CSN COMPLEX</scope>
    <scope>CLEAVAGE OF INITIATOR METHIONINE</scope>
    <scope>PHOSPHORYLATION AT SER-175</scope>
</reference>
<reference key="13">
    <citation type="journal article" date="2008" name="Proc. Natl. Acad. Sci. U.S.A.">
        <title>A quantitative atlas of mitotic phosphorylation.</title>
        <authorList>
            <person name="Dephoure N."/>
            <person name="Zhou C."/>
            <person name="Villen J."/>
            <person name="Beausoleil S.A."/>
            <person name="Bakalarski C.E."/>
            <person name="Elledge S.J."/>
            <person name="Gygi S.P."/>
        </authorList>
    </citation>
    <scope>IDENTIFICATION BY MASS SPECTROMETRY [LARGE SCALE ANALYSIS]</scope>
    <source>
        <tissue>Cervix carcinoma</tissue>
    </source>
</reference>
<reference key="14">
    <citation type="journal article" date="2010" name="Sci. Signal.">
        <title>Quantitative phosphoproteomics reveals widespread full phosphorylation site occupancy during mitosis.</title>
        <authorList>
            <person name="Olsen J.V."/>
            <person name="Vermeulen M."/>
            <person name="Santamaria A."/>
            <person name="Kumar C."/>
            <person name="Miller M.L."/>
            <person name="Jensen L.J."/>
            <person name="Gnad F."/>
            <person name="Cox J."/>
            <person name="Jensen T.S."/>
            <person name="Nigg E.A."/>
            <person name="Brunak S."/>
            <person name="Mann M."/>
        </authorList>
    </citation>
    <scope>PHOSPHORYLATION [LARGE SCALE ANALYSIS] AT SER-175</scope>
    <scope>IDENTIFICATION BY MASS SPECTROMETRY [LARGE SCALE ANALYSIS]</scope>
    <source>
        <tissue>Cervix carcinoma</tissue>
    </source>
</reference>
<reference key="15">
    <citation type="journal article" date="2011" name="BMC Syst. Biol.">
        <title>Initial characterization of the human central proteome.</title>
        <authorList>
            <person name="Burkard T.R."/>
            <person name="Planyavsky M."/>
            <person name="Kaupe I."/>
            <person name="Breitwieser F.P."/>
            <person name="Buerckstuemmer T."/>
            <person name="Bennett K.L."/>
            <person name="Superti-Furga G."/>
            <person name="Colinge J."/>
        </authorList>
    </citation>
    <scope>IDENTIFICATION BY MASS SPECTROMETRY [LARGE SCALE ANALYSIS]</scope>
</reference>
<reference key="16">
    <citation type="journal article" date="2013" name="J. Proteome Res.">
        <title>Toward a comprehensive characterization of a human cancer cell phosphoproteome.</title>
        <authorList>
            <person name="Zhou H."/>
            <person name="Di Palma S."/>
            <person name="Preisinger C."/>
            <person name="Peng M."/>
            <person name="Polat A.N."/>
            <person name="Heck A.J."/>
            <person name="Mohammed S."/>
        </authorList>
    </citation>
    <scope>PHOSPHORYLATION [LARGE SCALE ANALYSIS] AT SER-175</scope>
    <scope>IDENTIFICATION BY MASS SPECTROMETRY [LARGE SCALE ANALYSIS]</scope>
    <source>
        <tissue>Cervix carcinoma</tissue>
        <tissue>Erythroleukemia</tissue>
    </source>
</reference>
<reference key="17">
    <citation type="journal article" date="2014" name="J. Proteomics">
        <title>An enzyme assisted RP-RPLC approach for in-depth analysis of human liver phosphoproteome.</title>
        <authorList>
            <person name="Bian Y."/>
            <person name="Song C."/>
            <person name="Cheng K."/>
            <person name="Dong M."/>
            <person name="Wang F."/>
            <person name="Huang J."/>
            <person name="Sun D."/>
            <person name="Wang L."/>
            <person name="Ye M."/>
            <person name="Zou H."/>
        </authorList>
    </citation>
    <scope>PHOSPHORYLATION [LARGE SCALE ANALYSIS] AT SER-175</scope>
    <scope>IDENTIFICATION BY MASS SPECTROMETRY [LARGE SCALE ANALYSIS]</scope>
    <source>
        <tissue>Liver</tissue>
    </source>
</reference>
<reference key="18">
    <citation type="journal article" date="2015" name="Cell Rep.">
        <title>CSNAP is a stoichiometric subunit of the COP9 signalosome.</title>
        <authorList>
            <person name="Rozen S."/>
            <person name="Fuezesi-Levi M.G."/>
            <person name="Ben-Nissan G."/>
            <person name="Mizrachi L."/>
            <person name="Gabashvili A."/>
            <person name="Levin Y."/>
            <person name="Ben-Dor S."/>
            <person name="Eisenstein M."/>
            <person name="Sharon M."/>
        </authorList>
    </citation>
    <scope>COMPOSITION OF THE CSN COMPLEX</scope>
</reference>
<comment type="function">
    <text evidence="2 3 4 5 8">Component of the COP9 signalosome complex (CSN), a complex involved in various cellular and developmental processes. The CSN complex is an essential regulator of the ubiquitin (Ubl) conjugation pathway by mediating the deneddylation of the cullin subunits of SCF-type E3 ligase complexes, leading to decrease the Ubl ligase activity of SCF-type complexes such as SCF, CSA or DDB2. The complex is also involved in phosphorylation of p53/TP53, c-jun/JUN, IkappaBalpha/NFKBIA, ITPK1 and IRF8/ICSBP, possibly via its association with CK2 and PKD kinases. CSN-dependent phosphorylation of TP53 and JUN promotes and protects degradation by the Ubl system, respectively.</text>
</comment>
<comment type="subunit">
    <text evidence="3 6 7">Component of the CSN complex, composed of COPS1/GPS1, COPS2, COPS3, COPS4, COPS5, COPS6, COPS7 (COPS7A or COPS7B), COPS8 and COPS9 isoform 1 (PubMed:11337588, PubMed:18850735, PubMed:26456823). In the complex, it probably interacts directly with COPS3, COPS4 and COPS7 (COPS7A or COPS7B) (PubMed:18850735).</text>
</comment>
<comment type="interaction">
    <interactant intactId="EBI-2510102">
        <id>Q99627</id>
    </interactant>
    <interactant intactId="EBI-350590">
        <id>Q9UNS2</id>
        <label>COPS3</label>
    </interactant>
    <organismsDiffer>false</organismsDiffer>
    <experiments>17</experiments>
</comment>
<comment type="interaction">
    <interactant intactId="EBI-2510102">
        <id>Q99627</id>
    </interactant>
    <interactant intactId="EBI-10983983">
        <id>Q13098-7</id>
        <label>GPS1</label>
    </interactant>
    <organismsDiffer>false</organismsDiffer>
    <experiments>4</experiments>
</comment>
<comment type="interaction">
    <interactant intactId="EBI-2510102">
        <id>Q99627</id>
    </interactant>
    <interactant intactId="EBI-3921347">
        <id>P51687</id>
        <label>SUOX</label>
    </interactant>
    <organismsDiffer>false</organismsDiffer>
    <experiments>3</experiments>
</comment>
<comment type="interaction">
    <interactant intactId="EBI-2510102">
        <id>Q99627</id>
    </interactant>
    <interactant intactId="EBI-739895">
        <id>Q8N6Y0</id>
        <label>USHBP1</label>
    </interactant>
    <organismsDiffer>false</organismsDiffer>
    <experiments>3</experiments>
</comment>
<comment type="subcellular location">
    <subcellularLocation>
        <location evidence="8">Cytoplasm</location>
    </subcellularLocation>
    <subcellularLocation>
        <location evidence="8">Nucleus</location>
    </subcellularLocation>
</comment>
<comment type="alternative products">
    <event type="alternative splicing"/>
    <isoform>
        <id>Q99627-1</id>
        <name>1</name>
        <sequence type="displayed"/>
    </isoform>
    <isoform>
        <id>Q99627-2</id>
        <name>2</name>
        <sequence type="described" ref="VSP_042715"/>
    </isoform>
</comment>
<comment type="similarity">
    <text evidence="10">Belongs to the CSN8 family.</text>
</comment>